<dbReference type="EC" id="2.4.1.227" evidence="1"/>
<dbReference type="EMBL" id="AE017283">
    <property type="protein sequence ID" value="AAT82514.1"/>
    <property type="molecule type" value="Genomic_DNA"/>
</dbReference>
<dbReference type="RefSeq" id="WP_002515244.1">
    <property type="nucleotide sequence ID" value="NZ_CP025935.1"/>
</dbReference>
<dbReference type="SMR" id="Q6A9Q2"/>
<dbReference type="CAZy" id="GT28">
    <property type="family name" value="Glycosyltransferase Family 28"/>
</dbReference>
<dbReference type="EnsemblBacteria" id="AAT82514">
    <property type="protein sequence ID" value="AAT82514"/>
    <property type="gene ID" value="PPA0758"/>
</dbReference>
<dbReference type="GeneID" id="92856744"/>
<dbReference type="KEGG" id="pac:PPA0758"/>
<dbReference type="PATRIC" id="fig|267747.3.peg.795"/>
<dbReference type="eggNOG" id="COG0707">
    <property type="taxonomic scope" value="Bacteria"/>
</dbReference>
<dbReference type="HOGENOM" id="CLU_037404_1_0_11"/>
<dbReference type="UniPathway" id="UPA00219"/>
<dbReference type="Proteomes" id="UP000000603">
    <property type="component" value="Chromosome"/>
</dbReference>
<dbReference type="GO" id="GO:0005886">
    <property type="term" value="C:plasma membrane"/>
    <property type="evidence" value="ECO:0007669"/>
    <property type="project" value="UniProtKB-SubCell"/>
</dbReference>
<dbReference type="GO" id="GO:0051991">
    <property type="term" value="F:UDP-N-acetyl-D-glucosamine:N-acetylmuramoyl-L-alanyl-D-glutamyl-meso-2,6-diaminopimelyl-D-alanyl-D-alanine-diphosphoundecaprenol 4-beta-N-acetylglucosaminlytransferase activity"/>
    <property type="evidence" value="ECO:0007669"/>
    <property type="project" value="RHEA"/>
</dbReference>
<dbReference type="GO" id="GO:0050511">
    <property type="term" value="F:undecaprenyldiphospho-muramoylpentapeptide beta-N-acetylglucosaminyltransferase activity"/>
    <property type="evidence" value="ECO:0007669"/>
    <property type="project" value="UniProtKB-UniRule"/>
</dbReference>
<dbReference type="GO" id="GO:0005975">
    <property type="term" value="P:carbohydrate metabolic process"/>
    <property type="evidence" value="ECO:0007669"/>
    <property type="project" value="InterPro"/>
</dbReference>
<dbReference type="GO" id="GO:0051301">
    <property type="term" value="P:cell division"/>
    <property type="evidence" value="ECO:0007669"/>
    <property type="project" value="UniProtKB-KW"/>
</dbReference>
<dbReference type="GO" id="GO:0071555">
    <property type="term" value="P:cell wall organization"/>
    <property type="evidence" value="ECO:0007669"/>
    <property type="project" value="UniProtKB-KW"/>
</dbReference>
<dbReference type="GO" id="GO:0030259">
    <property type="term" value="P:lipid glycosylation"/>
    <property type="evidence" value="ECO:0007669"/>
    <property type="project" value="UniProtKB-UniRule"/>
</dbReference>
<dbReference type="GO" id="GO:0009252">
    <property type="term" value="P:peptidoglycan biosynthetic process"/>
    <property type="evidence" value="ECO:0007669"/>
    <property type="project" value="UniProtKB-UniRule"/>
</dbReference>
<dbReference type="GO" id="GO:0008360">
    <property type="term" value="P:regulation of cell shape"/>
    <property type="evidence" value="ECO:0007669"/>
    <property type="project" value="UniProtKB-KW"/>
</dbReference>
<dbReference type="CDD" id="cd03785">
    <property type="entry name" value="GT28_MurG"/>
    <property type="match status" value="1"/>
</dbReference>
<dbReference type="Gene3D" id="3.40.50.2000">
    <property type="entry name" value="Glycogen Phosphorylase B"/>
    <property type="match status" value="2"/>
</dbReference>
<dbReference type="HAMAP" id="MF_00033">
    <property type="entry name" value="MurG"/>
    <property type="match status" value="1"/>
</dbReference>
<dbReference type="InterPro" id="IPR006009">
    <property type="entry name" value="GlcNAc_MurG"/>
</dbReference>
<dbReference type="InterPro" id="IPR007235">
    <property type="entry name" value="Glyco_trans_28_C"/>
</dbReference>
<dbReference type="InterPro" id="IPR004276">
    <property type="entry name" value="GlycoTrans_28_N"/>
</dbReference>
<dbReference type="NCBIfam" id="TIGR01133">
    <property type="entry name" value="murG"/>
    <property type="match status" value="1"/>
</dbReference>
<dbReference type="PANTHER" id="PTHR21015:SF22">
    <property type="entry name" value="GLYCOSYLTRANSFERASE"/>
    <property type="match status" value="1"/>
</dbReference>
<dbReference type="PANTHER" id="PTHR21015">
    <property type="entry name" value="UDP-N-ACETYLGLUCOSAMINE--N-ACETYLMURAMYL-(PENTAPEPTIDE) PYROPHOSPHORYL-UNDECAPRENOL N-ACETYLGLUCOSAMINE TRANSFERASE 1"/>
    <property type="match status" value="1"/>
</dbReference>
<dbReference type="Pfam" id="PF04101">
    <property type="entry name" value="Glyco_tran_28_C"/>
    <property type="match status" value="1"/>
</dbReference>
<dbReference type="Pfam" id="PF03033">
    <property type="entry name" value="Glyco_transf_28"/>
    <property type="match status" value="1"/>
</dbReference>
<dbReference type="SUPFAM" id="SSF53756">
    <property type="entry name" value="UDP-Glycosyltransferase/glycogen phosphorylase"/>
    <property type="match status" value="1"/>
</dbReference>
<evidence type="ECO:0000255" key="1">
    <source>
        <dbReference type="HAMAP-Rule" id="MF_00033"/>
    </source>
</evidence>
<name>MURG_CUTAK</name>
<feature type="chain" id="PRO_0000225080" description="UDP-N-acetylglucosamine--N-acetylmuramyl-(pentapeptide) pyrophosphoryl-undecaprenol N-acetylglucosamine transferase">
    <location>
        <begin position="1"/>
        <end position="372"/>
    </location>
</feature>
<feature type="binding site" evidence="1">
    <location>
        <begin position="11"/>
        <end position="13"/>
    </location>
    <ligand>
        <name>UDP-N-acetyl-alpha-D-glucosamine</name>
        <dbReference type="ChEBI" id="CHEBI:57705"/>
    </ligand>
</feature>
<feature type="binding site" evidence="1">
    <location>
        <position position="123"/>
    </location>
    <ligand>
        <name>UDP-N-acetyl-alpha-D-glucosamine</name>
        <dbReference type="ChEBI" id="CHEBI:57705"/>
    </ligand>
</feature>
<feature type="binding site" evidence="1">
    <location>
        <position position="160"/>
    </location>
    <ligand>
        <name>UDP-N-acetyl-alpha-D-glucosamine</name>
        <dbReference type="ChEBI" id="CHEBI:57705"/>
    </ligand>
</feature>
<feature type="binding site" evidence="1">
    <location>
        <position position="200"/>
    </location>
    <ligand>
        <name>UDP-N-acetyl-alpha-D-glucosamine</name>
        <dbReference type="ChEBI" id="CHEBI:57705"/>
    </ligand>
</feature>
<feature type="binding site" evidence="1">
    <location>
        <position position="298"/>
    </location>
    <ligand>
        <name>UDP-N-acetyl-alpha-D-glucosamine</name>
        <dbReference type="ChEBI" id="CHEBI:57705"/>
    </ligand>
</feature>
<reference key="1">
    <citation type="journal article" date="2004" name="Science">
        <title>The complete genome sequence of Propionibacterium acnes, a commensal of human skin.</title>
        <authorList>
            <person name="Brueggemann H."/>
            <person name="Henne A."/>
            <person name="Hoster F."/>
            <person name="Liesegang H."/>
            <person name="Wiezer A."/>
            <person name="Strittmatter A."/>
            <person name="Hujer S."/>
            <person name="Duerre P."/>
            <person name="Gottschalk G."/>
        </authorList>
    </citation>
    <scope>NUCLEOTIDE SEQUENCE [LARGE SCALE GENOMIC DNA]</scope>
    <source>
        <strain>DSM 16379 / KPA171202</strain>
    </source>
</reference>
<protein>
    <recommendedName>
        <fullName evidence="1">UDP-N-acetylglucosamine--N-acetylmuramyl-(pentapeptide) pyrophosphoryl-undecaprenol N-acetylglucosamine transferase</fullName>
        <ecNumber evidence="1">2.4.1.227</ecNumber>
    </recommendedName>
    <alternativeName>
        <fullName evidence="1">Undecaprenyl-PP-MurNAc-pentapeptide-UDPGlcNAc GlcNAc transferase</fullName>
    </alternativeName>
</protein>
<comment type="function">
    <text evidence="1">Cell wall formation. Catalyzes the transfer of a GlcNAc subunit on undecaprenyl-pyrophosphoryl-MurNAc-pentapeptide (lipid intermediate I) to form undecaprenyl-pyrophosphoryl-MurNAc-(pentapeptide)GlcNAc (lipid intermediate II).</text>
</comment>
<comment type="catalytic activity">
    <reaction evidence="1">
        <text>di-trans,octa-cis-undecaprenyl diphospho-N-acetyl-alpha-D-muramoyl-L-alanyl-D-glutamyl-meso-2,6-diaminopimeloyl-D-alanyl-D-alanine + UDP-N-acetyl-alpha-D-glucosamine = di-trans,octa-cis-undecaprenyl diphospho-[N-acetyl-alpha-D-glucosaminyl-(1-&gt;4)]-N-acetyl-alpha-D-muramoyl-L-alanyl-D-glutamyl-meso-2,6-diaminopimeloyl-D-alanyl-D-alanine + UDP + H(+)</text>
        <dbReference type="Rhea" id="RHEA:31227"/>
        <dbReference type="ChEBI" id="CHEBI:15378"/>
        <dbReference type="ChEBI" id="CHEBI:57705"/>
        <dbReference type="ChEBI" id="CHEBI:58223"/>
        <dbReference type="ChEBI" id="CHEBI:61387"/>
        <dbReference type="ChEBI" id="CHEBI:61388"/>
        <dbReference type="EC" id="2.4.1.227"/>
    </reaction>
</comment>
<comment type="pathway">
    <text evidence="1">Cell wall biogenesis; peptidoglycan biosynthesis.</text>
</comment>
<comment type="subcellular location">
    <subcellularLocation>
        <location evidence="1">Cell membrane</location>
        <topology evidence="1">Peripheral membrane protein</topology>
        <orientation evidence="1">Cytoplasmic side</orientation>
    </subcellularLocation>
</comment>
<comment type="similarity">
    <text evidence="1">Belongs to the glycosyltransferase 28 family. MurG subfamily.</text>
</comment>
<accession>Q6A9Q2</accession>
<keyword id="KW-0131">Cell cycle</keyword>
<keyword id="KW-0132">Cell division</keyword>
<keyword id="KW-1003">Cell membrane</keyword>
<keyword id="KW-0133">Cell shape</keyword>
<keyword id="KW-0961">Cell wall biogenesis/degradation</keyword>
<keyword id="KW-0328">Glycosyltransferase</keyword>
<keyword id="KW-0472">Membrane</keyword>
<keyword id="KW-0573">Peptidoglycan synthesis</keyword>
<keyword id="KW-0808">Transferase</keyword>
<proteinExistence type="inferred from homology"/>
<gene>
    <name evidence="1" type="primary">murG</name>
    <name type="ordered locus">PPA0758</name>
</gene>
<organism>
    <name type="scientific">Cutibacterium acnes (strain DSM 16379 / KPA171202)</name>
    <name type="common">Propionibacterium acnes</name>
    <dbReference type="NCBI Taxonomy" id="267747"/>
    <lineage>
        <taxon>Bacteria</taxon>
        <taxon>Bacillati</taxon>
        <taxon>Actinomycetota</taxon>
        <taxon>Actinomycetes</taxon>
        <taxon>Propionibacteriales</taxon>
        <taxon>Propionibacteriaceae</taxon>
        <taxon>Cutibacterium</taxon>
    </lineage>
</organism>
<sequence>MVNVVLAGGGTAGHTSPLIATAMALQERGATVSCIGTPRGLEGRVIPEAGLQLDMIPPVPLPRTVNADLFKVPARLAGAVRKAGEVLQRRQTDVVVGFGGYVSLPAYLAARRAKIPVVIHEQNAVPGLANKIAARFAVFVGTAFPDTPLPKARFVGMPLRSQITDLADASGQARAERCARARADLGLDINRPTLLVSGGSQGAVAINEAVVAARTRLLADGVQILHVLGPKNIRGATRITDELTGASWLPMGYVDDMASAYAAADLMVARSGAGTVVETATVGLPTIYVPLPHGNGEQARNATSAVDAGAGVVVANADLDVERLLAETARIHDADVLAQMSAAGRGLMPAHAAEEMAVRVISAATSIDPTIG</sequence>